<accession>Q85FP7</accession>
<proteinExistence type="inferred from homology"/>
<organism>
    <name type="scientific">Cyanidioschyzon merolae (strain NIES-3377 / 10D)</name>
    <name type="common">Unicellular red alga</name>
    <dbReference type="NCBI Taxonomy" id="280699"/>
    <lineage>
        <taxon>Eukaryota</taxon>
        <taxon>Rhodophyta</taxon>
        <taxon>Bangiophyceae</taxon>
        <taxon>Cyanidiales</taxon>
        <taxon>Cyanidiaceae</taxon>
        <taxon>Cyanidioschyzon</taxon>
    </lineage>
</organism>
<gene>
    <name evidence="1" type="primary">cemA</name>
    <name type="synonym">ycf10</name>
</gene>
<reference key="1">
    <citation type="journal article" date="2003" name="DNA Res.">
        <title>Complete sequence and analysis of the plastid genome of the unicellular red alga Cyanidioschyzon merolae.</title>
        <authorList>
            <person name="Ohta N."/>
            <person name="Matsuzaki M."/>
            <person name="Misumi O."/>
            <person name="Miyagishima S.-Y."/>
            <person name="Nozaki H."/>
            <person name="Tanaka K."/>
            <person name="Shin-i T."/>
            <person name="Kohara Y."/>
            <person name="Kuroiwa T."/>
        </authorList>
    </citation>
    <scope>NUCLEOTIDE SEQUENCE [LARGE SCALE GENOMIC DNA]</scope>
    <source>
        <strain>NIES-3377 / 10D</strain>
    </source>
</reference>
<name>CEMA_CYAM1</name>
<geneLocation type="chloroplast"/>
<comment type="function">
    <text evidence="1">Contributes to K(+)/H(+) antiport activity by supporting proton efflux to control proton extrusion and homeostasis in chloroplasts in a light-dependent manner to modulate photosynthesis. Prevents excessive induction of non-photochemical quenching (NPQ) under continuous-light conditions. Indirectly promotes efficient inorganic carbon uptake into chloroplasts.</text>
</comment>
<comment type="catalytic activity">
    <reaction evidence="1">
        <text>K(+)(in) + H(+)(out) = K(+)(out) + H(+)(in)</text>
        <dbReference type="Rhea" id="RHEA:29467"/>
        <dbReference type="ChEBI" id="CHEBI:15378"/>
        <dbReference type="ChEBI" id="CHEBI:29103"/>
    </reaction>
</comment>
<comment type="subcellular location">
    <subcellularLocation>
        <location evidence="1">Plastid</location>
        <location evidence="1">Chloroplast inner membrane</location>
        <topology evidence="1">Multi-pass membrane protein</topology>
    </subcellularLocation>
</comment>
<comment type="similarity">
    <text evidence="1 2">Belongs to the CemA family.</text>
</comment>
<dbReference type="EMBL" id="AB002583">
    <property type="protein sequence ID" value="BAC76298.1"/>
    <property type="molecule type" value="Genomic_DNA"/>
</dbReference>
<dbReference type="RefSeq" id="NP_849136.1">
    <property type="nucleotide sequence ID" value="NC_004799.1"/>
</dbReference>
<dbReference type="SMR" id="Q85FP7"/>
<dbReference type="STRING" id="280699.Q85FP7"/>
<dbReference type="EnsemblPlants" id="CMV237CT">
    <property type="protein sequence ID" value="CMV237CT"/>
    <property type="gene ID" value="CMV237C"/>
</dbReference>
<dbReference type="GeneID" id="845062"/>
<dbReference type="Gramene" id="CMV237CT">
    <property type="protein sequence ID" value="CMV237CT"/>
    <property type="gene ID" value="CMV237C"/>
</dbReference>
<dbReference type="KEGG" id="cme:CymeCp204"/>
<dbReference type="eggNOG" id="ENOG502QR9Y">
    <property type="taxonomic scope" value="Eukaryota"/>
</dbReference>
<dbReference type="HOGENOM" id="CLU_1002709_0_0_1"/>
<dbReference type="Proteomes" id="UP000007014">
    <property type="component" value="Chloroplast"/>
</dbReference>
<dbReference type="GO" id="GO:0009706">
    <property type="term" value="C:chloroplast inner membrane"/>
    <property type="evidence" value="ECO:0007669"/>
    <property type="project" value="UniProtKB-SubCell"/>
</dbReference>
<dbReference type="GO" id="GO:0015297">
    <property type="term" value="F:antiporter activity"/>
    <property type="evidence" value="ECO:0007669"/>
    <property type="project" value="UniProtKB-KW"/>
</dbReference>
<dbReference type="GO" id="GO:0015078">
    <property type="term" value="F:proton transmembrane transporter activity"/>
    <property type="evidence" value="ECO:0007669"/>
    <property type="project" value="UniProtKB-UniRule"/>
</dbReference>
<dbReference type="GO" id="GO:0006813">
    <property type="term" value="P:potassium ion transport"/>
    <property type="evidence" value="ECO:0007669"/>
    <property type="project" value="UniProtKB-UniRule"/>
</dbReference>
<dbReference type="HAMAP" id="MF_01308">
    <property type="entry name" value="CemA_PxcA"/>
    <property type="match status" value="1"/>
</dbReference>
<dbReference type="InterPro" id="IPR004282">
    <property type="entry name" value="CemA"/>
</dbReference>
<dbReference type="PANTHER" id="PTHR33650:SF2">
    <property type="entry name" value="CHLOROPLAST ENVELOPE MEMBRANE PROTEIN"/>
    <property type="match status" value="1"/>
</dbReference>
<dbReference type="PANTHER" id="PTHR33650">
    <property type="entry name" value="CHLOROPLAST ENVELOPE MEMBRANE PROTEIN-RELATED"/>
    <property type="match status" value="1"/>
</dbReference>
<dbReference type="Pfam" id="PF03040">
    <property type="entry name" value="CemA"/>
    <property type="match status" value="1"/>
</dbReference>
<feature type="chain" id="PRO_0000216640" description="Potassium/proton antiporter CemA">
    <location>
        <begin position="1"/>
        <end position="276"/>
    </location>
</feature>
<feature type="transmembrane region" description="Helical" evidence="1">
    <location>
        <begin position="59"/>
        <end position="79"/>
    </location>
</feature>
<feature type="transmembrane region" description="Helical" evidence="1">
    <location>
        <begin position="199"/>
        <end position="219"/>
    </location>
</feature>
<feature type="transmembrane region" description="Helical" evidence="1">
    <location>
        <begin position="236"/>
        <end position="256"/>
    </location>
</feature>
<protein>
    <recommendedName>
        <fullName evidence="1">Potassium/proton antiporter CemA</fullName>
    </recommendedName>
    <alternativeName>
        <fullName evidence="1">Chloroplast envelope membrane protein A</fullName>
        <shortName evidence="1">CemA</shortName>
    </alternativeName>
</protein>
<sequence length="276" mass="32069">MKNWPLTTRSAFEKTGPIPRSISKTFEKLWKELDASAENEVMEEWRVARYQTVASLKYLLLLILIPVLVNQMSKSWIFGPLVDHVWSVNHADIFLNASQEERAFAQLQRFEERLHFDMLIGRLPTLSEEVIQQQIKNKALEIAYQYAQESAYAVKNVLADSASVASFLALMRFGKRQLSVFQSFVNEFIYGLSDTAKAFFIILFTDMFIGFHSPHGWEVLMEAVLRHFGLPENRDFIFLFIATFPVALDTVFKYWIFRYLNRVSPSAVATYHNMNE</sequence>
<keyword id="KW-0050">Antiport</keyword>
<keyword id="KW-0150">Chloroplast</keyword>
<keyword id="KW-0375">Hydrogen ion transport</keyword>
<keyword id="KW-0406">Ion transport</keyword>
<keyword id="KW-0472">Membrane</keyword>
<keyword id="KW-0934">Plastid</keyword>
<keyword id="KW-1001">Plastid inner membrane</keyword>
<keyword id="KW-0630">Potassium</keyword>
<keyword id="KW-0633">Potassium transport</keyword>
<keyword id="KW-1185">Reference proteome</keyword>
<keyword id="KW-0812">Transmembrane</keyword>
<keyword id="KW-1133">Transmembrane helix</keyword>
<keyword id="KW-0813">Transport</keyword>
<evidence type="ECO:0000255" key="1">
    <source>
        <dbReference type="HAMAP-Rule" id="MF_01308"/>
    </source>
</evidence>
<evidence type="ECO:0000305" key="2"/>